<organism>
    <name type="scientific">Arabidopsis thaliana</name>
    <name type="common">Mouse-ear cress</name>
    <dbReference type="NCBI Taxonomy" id="3702"/>
    <lineage>
        <taxon>Eukaryota</taxon>
        <taxon>Viridiplantae</taxon>
        <taxon>Streptophyta</taxon>
        <taxon>Embryophyta</taxon>
        <taxon>Tracheophyta</taxon>
        <taxon>Spermatophyta</taxon>
        <taxon>Magnoliopsida</taxon>
        <taxon>eudicotyledons</taxon>
        <taxon>Gunneridae</taxon>
        <taxon>Pentapetalae</taxon>
        <taxon>rosids</taxon>
        <taxon>malvids</taxon>
        <taxon>Brassicales</taxon>
        <taxon>Brassicaceae</taxon>
        <taxon>Camelineae</taxon>
        <taxon>Arabidopsis</taxon>
    </lineage>
</organism>
<sequence>MKITDISGKIETLVDSLRDMSPTRVRSSFSDEHVSENDDERSSWIALHPSALDMFEQIMRDAEGKQIIMFLDYDGTLSLITEDHDRAYITDEMREVVKEVATYFKTAIISGRSTDKVQSFVKLTGIHYAGSHGMDIKGPTNTDQSNQEEVMFQPASDYLPMIDEVVNVLKEKTKSIPGATVEHNKFCLTVHFRRVDETGWAALAEQVRLVLIDYPKLRLTQGRKVLELRPSIKWDKGKALEFLLNSLGIAESKDVLPVYIGDDRTDEDAFKVLCERGQGFGIIVSKTIKETYASYSLQDPSQVKEFLERLVKWKKQTLGE</sequence>
<reference key="1">
    <citation type="journal article" date="2000" name="Nature">
        <title>Sequence and analysis of chromosome 1 of the plant Arabidopsis thaliana.</title>
        <authorList>
            <person name="Theologis A."/>
            <person name="Ecker J.R."/>
            <person name="Palm C.J."/>
            <person name="Federspiel N.A."/>
            <person name="Kaul S."/>
            <person name="White O."/>
            <person name="Alonso J."/>
            <person name="Altafi H."/>
            <person name="Araujo R."/>
            <person name="Bowman C.L."/>
            <person name="Brooks S.Y."/>
            <person name="Buehler E."/>
            <person name="Chan A."/>
            <person name="Chao Q."/>
            <person name="Chen H."/>
            <person name="Cheuk R.F."/>
            <person name="Chin C.W."/>
            <person name="Chung M.K."/>
            <person name="Conn L."/>
            <person name="Conway A.B."/>
            <person name="Conway A.R."/>
            <person name="Creasy T.H."/>
            <person name="Dewar K."/>
            <person name="Dunn P."/>
            <person name="Etgu P."/>
            <person name="Feldblyum T.V."/>
            <person name="Feng J.-D."/>
            <person name="Fong B."/>
            <person name="Fujii C.Y."/>
            <person name="Gill J.E."/>
            <person name="Goldsmith A.D."/>
            <person name="Haas B."/>
            <person name="Hansen N.F."/>
            <person name="Hughes B."/>
            <person name="Huizar L."/>
            <person name="Hunter J.L."/>
            <person name="Jenkins J."/>
            <person name="Johnson-Hopson C."/>
            <person name="Khan S."/>
            <person name="Khaykin E."/>
            <person name="Kim C.J."/>
            <person name="Koo H.L."/>
            <person name="Kremenetskaia I."/>
            <person name="Kurtz D.B."/>
            <person name="Kwan A."/>
            <person name="Lam B."/>
            <person name="Langin-Hooper S."/>
            <person name="Lee A."/>
            <person name="Lee J.M."/>
            <person name="Lenz C.A."/>
            <person name="Li J.H."/>
            <person name="Li Y.-P."/>
            <person name="Lin X."/>
            <person name="Liu S.X."/>
            <person name="Liu Z.A."/>
            <person name="Luros J.S."/>
            <person name="Maiti R."/>
            <person name="Marziali A."/>
            <person name="Militscher J."/>
            <person name="Miranda M."/>
            <person name="Nguyen M."/>
            <person name="Nierman W.C."/>
            <person name="Osborne B.I."/>
            <person name="Pai G."/>
            <person name="Peterson J."/>
            <person name="Pham P.K."/>
            <person name="Rizzo M."/>
            <person name="Rooney T."/>
            <person name="Rowley D."/>
            <person name="Sakano H."/>
            <person name="Salzberg S.L."/>
            <person name="Schwartz J.R."/>
            <person name="Shinn P."/>
            <person name="Southwick A.M."/>
            <person name="Sun H."/>
            <person name="Tallon L.J."/>
            <person name="Tambunga G."/>
            <person name="Toriumi M.J."/>
            <person name="Town C.D."/>
            <person name="Utterback T."/>
            <person name="Van Aken S."/>
            <person name="Vaysberg M."/>
            <person name="Vysotskaia V.S."/>
            <person name="Walker M."/>
            <person name="Wu D."/>
            <person name="Yu G."/>
            <person name="Fraser C.M."/>
            <person name="Venter J.C."/>
            <person name="Davis R.W."/>
        </authorList>
    </citation>
    <scope>NUCLEOTIDE SEQUENCE [LARGE SCALE GENOMIC DNA]</scope>
    <source>
        <strain>cv. Columbia</strain>
    </source>
</reference>
<reference key="2">
    <citation type="journal article" date="2017" name="Plant J.">
        <title>Araport11: a complete reannotation of the Arabidopsis thaliana reference genome.</title>
        <authorList>
            <person name="Cheng C.Y."/>
            <person name="Krishnakumar V."/>
            <person name="Chan A.P."/>
            <person name="Thibaud-Nissen F."/>
            <person name="Schobel S."/>
            <person name="Town C.D."/>
        </authorList>
    </citation>
    <scope>GENOME REANNOTATION</scope>
    <source>
        <strain>cv. Columbia</strain>
    </source>
</reference>
<reference key="3">
    <citation type="journal article" date="2003" name="J. Exp. Bot.">
        <title>Is trehalose-6-phosphate a regulator of sugar metabolism in plants?</title>
        <authorList>
            <person name="Eastmond P.J."/>
            <person name="Li Y."/>
            <person name="Graham I.A."/>
        </authorList>
    </citation>
    <scope>GENE FAMILY</scope>
</reference>
<reference key="4">
    <citation type="journal article" date="2004" name="Plant Physiol.">
        <title>Trehalose mediated growth inhibition of Arabidopsis seedlings is due to trehalose-6-phosphate accumulation.</title>
        <authorList>
            <person name="Schluepmann H."/>
            <person name="van Dijken A.J.H."/>
            <person name="Aghdasi M."/>
            <person name="Wobbes B."/>
            <person name="Paul M."/>
            <person name="Smeekens S.C.M."/>
        </authorList>
    </citation>
    <scope>NOMENCLATURE</scope>
</reference>
<name>TPPC_ARATH</name>
<keyword id="KW-0378">Hydrolase</keyword>
<keyword id="KW-1185">Reference proteome</keyword>
<keyword id="KW-0346">Stress response</keyword>
<dbReference type="EC" id="3.1.3.12"/>
<dbReference type="EMBL" id="AC073942">
    <property type="protein sequence ID" value="AAF87852.1"/>
    <property type="status" value="ALT_SEQ"/>
    <property type="molecule type" value="Genomic_DNA"/>
</dbReference>
<dbReference type="EMBL" id="CP002684">
    <property type="protein sequence ID" value="AEE30212.1"/>
    <property type="molecule type" value="Genomic_DNA"/>
</dbReference>
<dbReference type="PIR" id="G86354">
    <property type="entry name" value="G86354"/>
</dbReference>
<dbReference type="RefSeq" id="NP_173640.1">
    <property type="nucleotide sequence ID" value="NM_102071.2"/>
</dbReference>
<dbReference type="SMR" id="F4I1A6"/>
<dbReference type="FunCoup" id="F4I1A6">
    <property type="interactions" value="172"/>
</dbReference>
<dbReference type="STRING" id="3702.F4I1A6"/>
<dbReference type="PaxDb" id="3702-AT1G22210.1"/>
<dbReference type="ProteomicsDB" id="228320"/>
<dbReference type="DNASU" id="838826"/>
<dbReference type="EnsemblPlants" id="AT1G22210.1">
    <property type="protein sequence ID" value="AT1G22210.1"/>
    <property type="gene ID" value="AT1G22210"/>
</dbReference>
<dbReference type="GeneID" id="838826"/>
<dbReference type="Gramene" id="AT1G22210.1">
    <property type="protein sequence ID" value="AT1G22210.1"/>
    <property type="gene ID" value="AT1G22210"/>
</dbReference>
<dbReference type="KEGG" id="ath:AT1G22210"/>
<dbReference type="Araport" id="AT1G22210"/>
<dbReference type="TAIR" id="AT1G22210">
    <property type="gene designation" value="TPPC"/>
</dbReference>
<dbReference type="eggNOG" id="KOG1050">
    <property type="taxonomic scope" value="Eukaryota"/>
</dbReference>
<dbReference type="HOGENOM" id="CLU_037265_1_1_1"/>
<dbReference type="InParanoid" id="F4I1A6"/>
<dbReference type="OMA" id="GIHYAGS"/>
<dbReference type="OrthoDB" id="411251at2759"/>
<dbReference type="UniPathway" id="UPA00299"/>
<dbReference type="PRO" id="PR:F4I1A6"/>
<dbReference type="Proteomes" id="UP000006548">
    <property type="component" value="Chromosome 1"/>
</dbReference>
<dbReference type="ExpressionAtlas" id="F4I1A6">
    <property type="expression patterns" value="baseline and differential"/>
</dbReference>
<dbReference type="GO" id="GO:0004805">
    <property type="term" value="F:trehalose-phosphatase activity"/>
    <property type="evidence" value="ECO:0007669"/>
    <property type="project" value="UniProtKB-EC"/>
</dbReference>
<dbReference type="GO" id="GO:0005992">
    <property type="term" value="P:trehalose biosynthetic process"/>
    <property type="evidence" value="ECO:0007669"/>
    <property type="project" value="UniProtKB-UniPathway"/>
</dbReference>
<dbReference type="CDD" id="cd01627">
    <property type="entry name" value="HAD_TPP"/>
    <property type="match status" value="1"/>
</dbReference>
<dbReference type="FunFam" id="3.40.50.1000:FF:000073">
    <property type="entry name" value="Trehalose 6-phosphate phosphatase"/>
    <property type="match status" value="1"/>
</dbReference>
<dbReference type="Gene3D" id="3.40.50.1000">
    <property type="entry name" value="HAD superfamily/HAD-like"/>
    <property type="match status" value="2"/>
</dbReference>
<dbReference type="InterPro" id="IPR036412">
    <property type="entry name" value="HAD-like_sf"/>
</dbReference>
<dbReference type="InterPro" id="IPR006379">
    <property type="entry name" value="HAD-SF_hydro_IIB"/>
</dbReference>
<dbReference type="InterPro" id="IPR023214">
    <property type="entry name" value="HAD_sf"/>
</dbReference>
<dbReference type="InterPro" id="IPR044651">
    <property type="entry name" value="OTSB-like"/>
</dbReference>
<dbReference type="InterPro" id="IPR003337">
    <property type="entry name" value="Trehalose_PPase"/>
</dbReference>
<dbReference type="NCBIfam" id="TIGR01484">
    <property type="entry name" value="HAD-SF-IIB"/>
    <property type="match status" value="1"/>
</dbReference>
<dbReference type="NCBIfam" id="TIGR00685">
    <property type="entry name" value="T6PP"/>
    <property type="match status" value="1"/>
</dbReference>
<dbReference type="PANTHER" id="PTHR43768">
    <property type="entry name" value="TREHALOSE 6-PHOSPHATE PHOSPHATASE"/>
    <property type="match status" value="1"/>
</dbReference>
<dbReference type="PANTHER" id="PTHR43768:SF32">
    <property type="entry name" value="TREHALOSE-PHOSPHATE PHOSPHATASE C-RELATED"/>
    <property type="match status" value="1"/>
</dbReference>
<dbReference type="Pfam" id="PF02358">
    <property type="entry name" value="Trehalose_PPase"/>
    <property type="match status" value="1"/>
</dbReference>
<dbReference type="SUPFAM" id="SSF56784">
    <property type="entry name" value="HAD-like"/>
    <property type="match status" value="1"/>
</dbReference>
<gene>
    <name type="primary">TPPC</name>
    <name type="ordered locus">At1g22210</name>
    <name type="ORF">F16L1.6</name>
</gene>
<protein>
    <recommendedName>
        <fullName>Probable trehalose-phosphate phosphatase C</fullName>
        <shortName>AtTPPC</shortName>
        <ecNumber>3.1.3.12</ecNumber>
    </recommendedName>
    <alternativeName>
        <fullName>Trehalose 6-phosphate phosphatase</fullName>
    </alternativeName>
</protein>
<evidence type="ECO:0000250" key="1"/>
<evidence type="ECO:0000305" key="2"/>
<proteinExistence type="evidence at transcript level"/>
<accession>F4I1A6</accession>
<accession>Q9LM17</accession>
<comment type="function">
    <text evidence="1">Removes the phosphate from trehalose 6-phosphate to produce free trehalose. Trehalose accumulation in plant may improve abiotic stress tolerance (By similarity).</text>
</comment>
<comment type="catalytic activity">
    <reaction>
        <text>alpha,alpha-trehalose 6-phosphate + H2O = alpha,alpha-trehalose + phosphate</text>
        <dbReference type="Rhea" id="RHEA:23420"/>
        <dbReference type="ChEBI" id="CHEBI:15377"/>
        <dbReference type="ChEBI" id="CHEBI:16551"/>
        <dbReference type="ChEBI" id="CHEBI:43474"/>
        <dbReference type="ChEBI" id="CHEBI:58429"/>
        <dbReference type="EC" id="3.1.3.12"/>
    </reaction>
</comment>
<comment type="cofactor">
    <cofactor evidence="1">
        <name>a divalent metal cation</name>
        <dbReference type="ChEBI" id="CHEBI:60240"/>
    </cofactor>
</comment>
<comment type="pathway">
    <text>Glycan biosynthesis; trehalose biosynthesis.</text>
</comment>
<comment type="similarity">
    <text evidence="2">Belongs to the trehalose phosphatase family.</text>
</comment>
<comment type="sequence caution" evidence="2">
    <conflict type="erroneous gene model prediction">
        <sequence resource="EMBL-CDS" id="AAF87852"/>
    </conflict>
</comment>
<feature type="chain" id="PRO_0000417645" description="Probable trehalose-phosphate phosphatase C">
    <location>
        <begin position="1"/>
        <end position="320"/>
    </location>
</feature>